<organism>
    <name type="scientific">Escherichia coli O6:H1 (strain CFT073 / ATCC 700928 / UPEC)</name>
    <dbReference type="NCBI Taxonomy" id="199310"/>
    <lineage>
        <taxon>Bacteria</taxon>
        <taxon>Pseudomonadati</taxon>
        <taxon>Pseudomonadota</taxon>
        <taxon>Gammaproteobacteria</taxon>
        <taxon>Enterobacterales</taxon>
        <taxon>Enterobacteriaceae</taxon>
        <taxon>Escherichia</taxon>
    </lineage>
</organism>
<accession>P0A6U6</accession>
<accession>P17113</accession>
<gene>
    <name evidence="1" type="primary">rsmG</name>
    <name type="ordered locus">c4668</name>
</gene>
<reference key="1">
    <citation type="journal article" date="2002" name="Proc. Natl. Acad. Sci. U.S.A.">
        <title>Extensive mosaic structure revealed by the complete genome sequence of uropathogenic Escherichia coli.</title>
        <authorList>
            <person name="Welch R.A."/>
            <person name="Burland V."/>
            <person name="Plunkett G. III"/>
            <person name="Redford P."/>
            <person name="Roesch P."/>
            <person name="Rasko D."/>
            <person name="Buckles E.L."/>
            <person name="Liou S.-R."/>
            <person name="Boutin A."/>
            <person name="Hackett J."/>
            <person name="Stroud D."/>
            <person name="Mayhew G.F."/>
            <person name="Rose D.J."/>
            <person name="Zhou S."/>
            <person name="Schwartz D.C."/>
            <person name="Perna N.T."/>
            <person name="Mobley H.L.T."/>
            <person name="Donnenberg M.S."/>
            <person name="Blattner F.R."/>
        </authorList>
    </citation>
    <scope>NUCLEOTIDE SEQUENCE [LARGE SCALE GENOMIC DNA]</scope>
    <source>
        <strain>CFT073 / ATCC 700928 / UPEC</strain>
    </source>
</reference>
<name>RSMG_ECOL6</name>
<evidence type="ECO:0000255" key="1">
    <source>
        <dbReference type="HAMAP-Rule" id="MF_00074"/>
    </source>
</evidence>
<proteinExistence type="inferred from homology"/>
<dbReference type="EC" id="2.1.1.170" evidence="1"/>
<dbReference type="EMBL" id="AE014075">
    <property type="protein sequence ID" value="AAN83100.1"/>
    <property type="molecule type" value="Genomic_DNA"/>
</dbReference>
<dbReference type="RefSeq" id="WP_000932839.1">
    <property type="nucleotide sequence ID" value="NZ_CP051263.1"/>
</dbReference>
<dbReference type="SMR" id="P0A6U6"/>
<dbReference type="STRING" id="199310.c4668"/>
<dbReference type="GeneID" id="93778227"/>
<dbReference type="KEGG" id="ecc:c4668"/>
<dbReference type="eggNOG" id="COG0357">
    <property type="taxonomic scope" value="Bacteria"/>
</dbReference>
<dbReference type="HOGENOM" id="CLU_065341_2_2_6"/>
<dbReference type="BioCyc" id="ECOL199310:C4668-MONOMER"/>
<dbReference type="Proteomes" id="UP000001410">
    <property type="component" value="Chromosome"/>
</dbReference>
<dbReference type="GO" id="GO:0005829">
    <property type="term" value="C:cytosol"/>
    <property type="evidence" value="ECO:0007669"/>
    <property type="project" value="TreeGrafter"/>
</dbReference>
<dbReference type="GO" id="GO:0070043">
    <property type="term" value="F:rRNA (guanine-N7-)-methyltransferase activity"/>
    <property type="evidence" value="ECO:0007669"/>
    <property type="project" value="UniProtKB-UniRule"/>
</dbReference>
<dbReference type="CDD" id="cd02440">
    <property type="entry name" value="AdoMet_MTases"/>
    <property type="match status" value="1"/>
</dbReference>
<dbReference type="FunFam" id="3.40.50.150:FF:000032">
    <property type="entry name" value="Ribosomal RNA small subunit methyltransferase G"/>
    <property type="match status" value="1"/>
</dbReference>
<dbReference type="Gene3D" id="3.40.50.150">
    <property type="entry name" value="Vaccinia Virus protein VP39"/>
    <property type="match status" value="1"/>
</dbReference>
<dbReference type="HAMAP" id="MF_00074">
    <property type="entry name" value="16SrRNA_methyltr_G"/>
    <property type="match status" value="1"/>
</dbReference>
<dbReference type="InterPro" id="IPR003682">
    <property type="entry name" value="rRNA_ssu_MeTfrase_G"/>
</dbReference>
<dbReference type="InterPro" id="IPR029063">
    <property type="entry name" value="SAM-dependent_MTases_sf"/>
</dbReference>
<dbReference type="NCBIfam" id="TIGR00138">
    <property type="entry name" value="rsmG_gidB"/>
    <property type="match status" value="1"/>
</dbReference>
<dbReference type="PANTHER" id="PTHR31760">
    <property type="entry name" value="S-ADENOSYL-L-METHIONINE-DEPENDENT METHYLTRANSFERASES SUPERFAMILY PROTEIN"/>
    <property type="match status" value="1"/>
</dbReference>
<dbReference type="PANTHER" id="PTHR31760:SF0">
    <property type="entry name" value="S-ADENOSYL-L-METHIONINE-DEPENDENT METHYLTRANSFERASES SUPERFAMILY PROTEIN"/>
    <property type="match status" value="1"/>
</dbReference>
<dbReference type="Pfam" id="PF02527">
    <property type="entry name" value="GidB"/>
    <property type="match status" value="1"/>
</dbReference>
<dbReference type="PIRSF" id="PIRSF003078">
    <property type="entry name" value="GidB"/>
    <property type="match status" value="1"/>
</dbReference>
<dbReference type="SUPFAM" id="SSF53335">
    <property type="entry name" value="S-adenosyl-L-methionine-dependent methyltransferases"/>
    <property type="match status" value="1"/>
</dbReference>
<comment type="function">
    <text evidence="1">Specifically methylates the N7 position of guanine in position 527 of 16S rRNA.</text>
</comment>
<comment type="catalytic activity">
    <reaction evidence="1">
        <text>guanosine(527) in 16S rRNA + S-adenosyl-L-methionine = N(7)-methylguanosine(527) in 16S rRNA + S-adenosyl-L-homocysteine</text>
        <dbReference type="Rhea" id="RHEA:42732"/>
        <dbReference type="Rhea" id="RHEA-COMP:10209"/>
        <dbReference type="Rhea" id="RHEA-COMP:10210"/>
        <dbReference type="ChEBI" id="CHEBI:57856"/>
        <dbReference type="ChEBI" id="CHEBI:59789"/>
        <dbReference type="ChEBI" id="CHEBI:74269"/>
        <dbReference type="ChEBI" id="CHEBI:74480"/>
        <dbReference type="EC" id="2.1.1.170"/>
    </reaction>
</comment>
<comment type="subcellular location">
    <subcellularLocation>
        <location evidence="1">Cytoplasm</location>
    </subcellularLocation>
</comment>
<comment type="similarity">
    <text evidence="1">Belongs to the methyltransferase superfamily. RNA methyltransferase RsmG family.</text>
</comment>
<keyword id="KW-0963">Cytoplasm</keyword>
<keyword id="KW-0489">Methyltransferase</keyword>
<keyword id="KW-1185">Reference proteome</keyword>
<keyword id="KW-0698">rRNA processing</keyword>
<keyword id="KW-0949">S-adenosyl-L-methionine</keyword>
<keyword id="KW-0808">Transferase</keyword>
<protein>
    <recommendedName>
        <fullName evidence="1">Ribosomal RNA small subunit methyltransferase G</fullName>
        <ecNumber evidence="1">2.1.1.170</ecNumber>
    </recommendedName>
    <alternativeName>
        <fullName evidence="1">16S rRNA 7-methylguanosine methyltransferase</fullName>
        <shortName evidence="1">16S rRNA m7G methyltransferase</shortName>
    </alternativeName>
</protein>
<sequence>MLNKLSLLLKDAGISLTDHQKNQLIAYVNMLHKWNKAYNLTSVRDPNEMLVRHILDSIVVAPYLQGERFIDVGTGPGLPGIPLSIVRPEAHFTLLDSLGKRVRFLRQVQHELKLENIEPVQSRVEEFPSEPPFDGVISRAFASLNDMVSWCHHLPGEQGRFYALKGQMPEDEIALLPEEYQVESVVKLQVPALDGERHLVVIKANKI</sequence>
<feature type="chain" id="PRO_0000184251" description="Ribosomal RNA small subunit methyltransferase G">
    <location>
        <begin position="1"/>
        <end position="207"/>
    </location>
</feature>
<feature type="binding site" evidence="1">
    <location>
        <position position="73"/>
    </location>
    <ligand>
        <name>S-adenosyl-L-methionine</name>
        <dbReference type="ChEBI" id="CHEBI:59789"/>
    </ligand>
</feature>
<feature type="binding site" evidence="1">
    <location>
        <position position="78"/>
    </location>
    <ligand>
        <name>S-adenosyl-L-methionine</name>
        <dbReference type="ChEBI" id="CHEBI:59789"/>
    </ligand>
</feature>
<feature type="binding site" evidence="1">
    <location>
        <begin position="124"/>
        <end position="125"/>
    </location>
    <ligand>
        <name>S-adenosyl-L-methionine</name>
        <dbReference type="ChEBI" id="CHEBI:59789"/>
    </ligand>
</feature>
<feature type="binding site" evidence="1">
    <location>
        <position position="139"/>
    </location>
    <ligand>
        <name>S-adenosyl-L-methionine</name>
        <dbReference type="ChEBI" id="CHEBI:59789"/>
    </ligand>
</feature>